<reference key="1">
    <citation type="journal article" date="1995" name="Eur. J. Biochem.">
        <title>Characterization of 45-kDa/54-kDa HSP27 kinase, a stress-sensitive kinase which may activate the phosphorylation-dependent protective function of mammalian 27-kDa heat-shock protein HSP27.</title>
        <authorList>
            <person name="Huot J."/>
            <person name="Lambert H."/>
            <person name="Lavoie J.N."/>
            <person name="Guimond A."/>
            <person name="Houle F."/>
            <person name="Landry J."/>
        </authorList>
    </citation>
    <scope>NUCLEOTIDE SEQUENCE [MRNA]</scope>
    <source>
        <tissue>Ovary</tissue>
    </source>
</reference>
<evidence type="ECO:0000250" key="1"/>
<evidence type="ECO:0000250" key="2">
    <source>
        <dbReference type="UniProtKB" id="P49137"/>
    </source>
</evidence>
<evidence type="ECO:0000255" key="3">
    <source>
        <dbReference type="PROSITE-ProRule" id="PRU00159"/>
    </source>
</evidence>
<evidence type="ECO:0000255" key="4">
    <source>
        <dbReference type="PROSITE-ProRule" id="PRU10027"/>
    </source>
</evidence>
<evidence type="ECO:0000305" key="5"/>
<comment type="function">
    <text evidence="2">Stress-activated serine/threonine-protein kinase involved in cytokine production, endocytosis, reorganization of the cytoskeleton, cell migration, cell cycle control, chromatin remodeling, DNA damage response and transcriptional regulation. Following stress, it is phosphorylated and activated by MAP kinase p38-alpha/MAPK14, leading to phosphorylation of substrates. Phosphorylates serine in the peptide sequence, Hyd-X-R-X(2)-S, where Hyd is a large hydrophobic residue. Phosphorylates ALOX5, CDC25B, CDC25C, CEP131, ELAVL1, HNRNPA0, HSP27/HSPB1, KRT18, KRT20, LIMK1, LSP1, PABPC1, PARN, PDE4A, RCSD1, RPS6KA3, TAB3 and TTP/ZFP36. Phosphorylates HSF1; leading to the interaction with HSP90 proteins and inhibiting HSF1 homotrimerization, DNA-binding and transactivation activities. Mediates phosphorylation of HSP27/HSPB1 in response to stress, leading to the dissociation of HSP27/HSPB1 from large small heat-shock protein (sHsps) oligomers and impairment of their chaperone activities and ability to protect against oxidative stress effectively. Involved in inflammatory response by regulating tumor necrosis factor (TNF) and IL6 production post-transcriptionally: acts by phosphorylating AU-rich elements (AREs)-binding proteins ELAVL1, HNRNPA0, PABPC1 and TTP/ZFP36, leading to regulation of the stability and translation of TNF and IL6 mRNAs. Phosphorylation of TTP/ZFP36, a major post-transcriptional regulator of TNF, promotes its binding to 14-3-3 proteins and reduces its ARE mRNA affinity, leading to inhibition of dependent degradation of ARE-containing transcripts. Phosphorylates CEP131 in response to cellular stress following ultraviolet irradiation which promotes binding of CEP131 to 14-3-3 proteins and inhibits formation of novel centriolar satellites. Also involved in late G2/M checkpoint following DNA damage through a process of post-transcriptional mRNA stabilization: following DNA damage, relocalizes from nucleus to cytoplasm and phosphorylates HNRNPA0 and PARN, leading to stabilization of GADD45A mRNA. Involved in toll-like receptor signaling pathway (TLR) in dendritic cells: required for acute TLR-induced macropinocytosis by phosphorylating and activating RPS6KA3.</text>
</comment>
<comment type="catalytic activity">
    <reaction>
        <text>L-seryl-[protein] + ATP = O-phospho-L-seryl-[protein] + ADP + H(+)</text>
        <dbReference type="Rhea" id="RHEA:17989"/>
        <dbReference type="Rhea" id="RHEA-COMP:9863"/>
        <dbReference type="Rhea" id="RHEA-COMP:11604"/>
        <dbReference type="ChEBI" id="CHEBI:15378"/>
        <dbReference type="ChEBI" id="CHEBI:29999"/>
        <dbReference type="ChEBI" id="CHEBI:30616"/>
        <dbReference type="ChEBI" id="CHEBI:83421"/>
        <dbReference type="ChEBI" id="CHEBI:456216"/>
        <dbReference type="EC" id="2.7.11.1"/>
    </reaction>
</comment>
<comment type="catalytic activity">
    <reaction>
        <text>L-threonyl-[protein] + ATP = O-phospho-L-threonyl-[protein] + ADP + H(+)</text>
        <dbReference type="Rhea" id="RHEA:46608"/>
        <dbReference type="Rhea" id="RHEA-COMP:11060"/>
        <dbReference type="Rhea" id="RHEA-COMP:11605"/>
        <dbReference type="ChEBI" id="CHEBI:15378"/>
        <dbReference type="ChEBI" id="CHEBI:30013"/>
        <dbReference type="ChEBI" id="CHEBI:30616"/>
        <dbReference type="ChEBI" id="CHEBI:61977"/>
        <dbReference type="ChEBI" id="CHEBI:456216"/>
        <dbReference type="EC" id="2.7.11.1"/>
    </reaction>
</comment>
<comment type="activity regulation">
    <text evidence="1">Activated following phosphorylation by p38-alpha/MAPK14 following various stresses. Inhibited following sumoylation. Specifically inhibited by pyrrolopyridine inhibitors (By similarity).</text>
</comment>
<comment type="subunit">
    <text evidence="2">Heterodimer with p38-alpha/MAPK14; this heterodimer forms a stable complex: molecules are positioned 'face to face' so that the ATP-binding sites of both kinases are at the heterodimer interface. Interacts with PHC2. Interacts with HSF1.</text>
</comment>
<comment type="subcellular location">
    <subcellularLocation>
        <location evidence="2">Cytoplasm</location>
    </subcellularLocation>
    <subcellularLocation>
        <location evidence="2">Nucleus</location>
    </subcellularLocation>
    <text evidence="2">Phosphorylation and subsequent activation releases the autoinhibitory helix, resulting in the export from the nucleus into the cytoplasm.</text>
</comment>
<comment type="PTM">
    <text evidence="2">Sumoylation inhibits the protein kinase activity.</text>
</comment>
<comment type="PTM">
    <text evidence="2">Phosphorylated and activated by MAP kinase p38-alpha/MAPK14 at Thr-151, Ser-201 and Thr-263.</text>
</comment>
<comment type="similarity">
    <text evidence="5">Belongs to the protein kinase superfamily. CAMK Ser/Thr protein kinase family.</text>
</comment>
<keyword id="KW-0067">ATP-binding</keyword>
<keyword id="KW-0963">Cytoplasm</keyword>
<keyword id="KW-0227">DNA damage</keyword>
<keyword id="KW-1017">Isopeptide bond</keyword>
<keyword id="KW-0418">Kinase</keyword>
<keyword id="KW-0547">Nucleotide-binding</keyword>
<keyword id="KW-0539">Nucleus</keyword>
<keyword id="KW-0597">Phosphoprotein</keyword>
<keyword id="KW-0723">Serine/threonine-protein kinase</keyword>
<keyword id="KW-0808">Transferase</keyword>
<keyword id="KW-0832">Ubl conjugation</keyword>
<proteinExistence type="evidence at transcript level"/>
<sequence>LGINGKVLRIFDKRTQQKFALKMLQDCPKARREVELHWRASQCPHIVDIVDVYENLYAGRKCLLIVMECLDGGELFSRIQDRGDQAFTEREASEIMKSIGEAIQYLHSINIAHRDVKPENLLYTSKRPNAILKLTDFGFAKETTSHNSLTTPCYTPYYVAPEVLGPEKYDKSCDMWSLGVIMYILLCGYPPFYSNHGLAISPGMKTRIRMGQYEFPNPEWSEVSEEVKMLIRNLLKTEPTQRMTITEFMNHPWIMQSTKVPQTPLHTSRVLKEDKERWEDVKEEMTSALATMRVDYEQIKIKKIEDASNPLLLKRRKKARAVEAAALAH</sequence>
<organism>
    <name type="scientific">Cricetulus longicaudatus</name>
    <name type="common">Long-tailed dwarf hamster</name>
    <dbReference type="NCBI Taxonomy" id="10030"/>
    <lineage>
        <taxon>Eukaryota</taxon>
        <taxon>Metazoa</taxon>
        <taxon>Chordata</taxon>
        <taxon>Craniata</taxon>
        <taxon>Vertebrata</taxon>
        <taxon>Euteleostomi</taxon>
        <taxon>Mammalia</taxon>
        <taxon>Eutheria</taxon>
        <taxon>Euarchontoglires</taxon>
        <taxon>Glires</taxon>
        <taxon>Rodentia</taxon>
        <taxon>Myomorpha</taxon>
        <taxon>Muroidea</taxon>
        <taxon>Cricetidae</taxon>
        <taxon>Cricetinae</taxon>
        <taxon>Cricetulus</taxon>
    </lineage>
</organism>
<name>MAPK2_CRILO</name>
<gene>
    <name type="primary">MAPKAPK2</name>
</gene>
<dbReference type="EC" id="2.7.11.1"/>
<dbReference type="EMBL" id="X82220">
    <property type="protein sequence ID" value="CAA57700.1"/>
    <property type="molecule type" value="mRNA"/>
</dbReference>
<dbReference type="PIR" id="S49490">
    <property type="entry name" value="S49490"/>
</dbReference>
<dbReference type="BMRB" id="P49136"/>
<dbReference type="SMR" id="P49136"/>
<dbReference type="GO" id="GO:0005737">
    <property type="term" value="C:cytoplasm"/>
    <property type="evidence" value="ECO:0000250"/>
    <property type="project" value="UniProtKB"/>
</dbReference>
<dbReference type="GO" id="GO:0005634">
    <property type="term" value="C:nucleus"/>
    <property type="evidence" value="ECO:0000250"/>
    <property type="project" value="UniProtKB"/>
</dbReference>
<dbReference type="GO" id="GO:0005524">
    <property type="term" value="F:ATP binding"/>
    <property type="evidence" value="ECO:0007669"/>
    <property type="project" value="UniProtKB-KW"/>
</dbReference>
<dbReference type="GO" id="GO:0106310">
    <property type="term" value="F:protein serine kinase activity"/>
    <property type="evidence" value="ECO:0007669"/>
    <property type="project" value="RHEA"/>
</dbReference>
<dbReference type="GO" id="GO:0004674">
    <property type="term" value="F:protein serine/threonine kinase activity"/>
    <property type="evidence" value="ECO:0000250"/>
    <property type="project" value="UniProtKB"/>
</dbReference>
<dbReference type="GO" id="GO:0070935">
    <property type="term" value="P:3'-UTR-mediated mRNA stabilization"/>
    <property type="evidence" value="ECO:0000250"/>
    <property type="project" value="UniProtKB"/>
</dbReference>
<dbReference type="GO" id="GO:0006974">
    <property type="term" value="P:DNA damage response"/>
    <property type="evidence" value="ECO:0000250"/>
    <property type="project" value="UniProtKB"/>
</dbReference>
<dbReference type="GO" id="GO:0006954">
    <property type="term" value="P:inflammatory response"/>
    <property type="evidence" value="ECO:0000250"/>
    <property type="project" value="UniProtKB"/>
</dbReference>
<dbReference type="GO" id="GO:0044351">
    <property type="term" value="P:macropinocytosis"/>
    <property type="evidence" value="ECO:0000250"/>
    <property type="project" value="UniProtKB"/>
</dbReference>
<dbReference type="GO" id="GO:0032675">
    <property type="term" value="P:regulation of interleukin-6 production"/>
    <property type="evidence" value="ECO:0000250"/>
    <property type="project" value="UniProtKB"/>
</dbReference>
<dbReference type="GO" id="GO:0032680">
    <property type="term" value="P:regulation of tumor necrosis factor production"/>
    <property type="evidence" value="ECO:0000250"/>
    <property type="project" value="UniProtKB"/>
</dbReference>
<dbReference type="GO" id="GO:0034097">
    <property type="term" value="P:response to cytokine"/>
    <property type="evidence" value="ECO:0000250"/>
    <property type="project" value="UniProtKB"/>
</dbReference>
<dbReference type="GO" id="GO:0032496">
    <property type="term" value="P:response to lipopolysaccharide"/>
    <property type="evidence" value="ECO:0000250"/>
    <property type="project" value="UniProtKB"/>
</dbReference>
<dbReference type="GO" id="GO:0002224">
    <property type="term" value="P:toll-like receptor signaling pathway"/>
    <property type="evidence" value="ECO:0000250"/>
    <property type="project" value="UniProtKB"/>
</dbReference>
<dbReference type="CDD" id="cd14170">
    <property type="entry name" value="STKc_MAPKAPK2"/>
    <property type="match status" value="1"/>
</dbReference>
<dbReference type="FunFam" id="1.10.510.10:FF:000094">
    <property type="entry name" value="MAP kinase-activated protein kinase 2"/>
    <property type="match status" value="1"/>
</dbReference>
<dbReference type="FunFam" id="3.30.200.20:FF:000156">
    <property type="entry name" value="MAP kinase-activated protein kinase 3"/>
    <property type="match status" value="1"/>
</dbReference>
<dbReference type="FunFam" id="4.10.1170.10:FF:000001">
    <property type="entry name" value="MAP kinase-activated protein kinase 3"/>
    <property type="match status" value="1"/>
</dbReference>
<dbReference type="Gene3D" id="4.10.1170.10">
    <property type="entry name" value="MAP kinase activated protein kinase 2"/>
    <property type="match status" value="1"/>
</dbReference>
<dbReference type="Gene3D" id="3.30.200.20">
    <property type="entry name" value="Phosphorylase Kinase, domain 1"/>
    <property type="match status" value="1"/>
</dbReference>
<dbReference type="Gene3D" id="1.10.510.10">
    <property type="entry name" value="Transferase(Phosphotransferase) domain 1"/>
    <property type="match status" value="1"/>
</dbReference>
<dbReference type="InterPro" id="IPR011009">
    <property type="entry name" value="Kinase-like_dom_sf"/>
</dbReference>
<dbReference type="InterPro" id="IPR027442">
    <property type="entry name" value="MAPKAPK_C"/>
</dbReference>
<dbReference type="InterPro" id="IPR000719">
    <property type="entry name" value="Prot_kinase_dom"/>
</dbReference>
<dbReference type="InterPro" id="IPR008271">
    <property type="entry name" value="Ser/Thr_kinase_AS"/>
</dbReference>
<dbReference type="PANTHER" id="PTHR24347">
    <property type="entry name" value="SERINE/THREONINE-PROTEIN KINASE"/>
    <property type="match status" value="1"/>
</dbReference>
<dbReference type="Pfam" id="PF00069">
    <property type="entry name" value="Pkinase"/>
    <property type="match status" value="1"/>
</dbReference>
<dbReference type="SMART" id="SM00220">
    <property type="entry name" value="S_TKc"/>
    <property type="match status" value="1"/>
</dbReference>
<dbReference type="SUPFAM" id="SSF56112">
    <property type="entry name" value="Protein kinase-like (PK-like)"/>
    <property type="match status" value="1"/>
</dbReference>
<dbReference type="PROSITE" id="PS50011">
    <property type="entry name" value="PROTEIN_KINASE_DOM"/>
    <property type="match status" value="1"/>
</dbReference>
<dbReference type="PROSITE" id="PS00108">
    <property type="entry name" value="PROTEIN_KINASE_ST"/>
    <property type="match status" value="1"/>
</dbReference>
<protein>
    <recommendedName>
        <fullName>MAP kinase-activated protein kinase 2</fullName>
        <shortName>MAPK-activated protein kinase 2</shortName>
        <shortName>MAPKAP kinase 2</shortName>
        <shortName>MAPKAP-K2</shortName>
        <shortName>MAPKAPK-2</shortName>
        <shortName>MK-2</shortName>
        <shortName>MK2</shortName>
        <ecNumber>2.7.11.1</ecNumber>
    </recommendedName>
    <alternativeName>
        <fullName>P45-54 HSP27 kinase</fullName>
    </alternativeName>
</protein>
<accession>P49136</accession>
<feature type="chain" id="PRO_0000086287" description="MAP kinase-activated protein kinase 2">
    <location>
        <begin position="1" status="less than"/>
        <end position="329"/>
    </location>
</feature>
<feature type="domain" description="Protein kinase" evidence="3">
    <location>
        <begin position="1" status="less than"/>
        <end position="254"/>
    </location>
</feature>
<feature type="region of interest" description="Autoinhibitory helix" evidence="1">
    <location>
        <begin position="257"/>
        <end position="293"/>
    </location>
</feature>
<feature type="region of interest" description="p38 MAPK-binding site" evidence="1">
    <location>
        <begin position="295"/>
        <end position="319"/>
    </location>
</feature>
<feature type="short sequence motif" description="Nuclear export signal (NES)" evidence="1">
    <location>
        <begin position="285"/>
        <end position="294"/>
    </location>
</feature>
<feature type="short sequence motif" description="Bipartite nuclear localization signal 1" evidence="1">
    <location>
        <begin position="300"/>
        <end position="303"/>
    </location>
</feature>
<feature type="short sequence motif" description="Bipartite nuclear localization signal 2" evidence="1">
    <location>
        <begin position="314"/>
        <end position="318"/>
    </location>
</feature>
<feature type="active site" description="Proton acceptor" evidence="3 4">
    <location>
        <position position="115"/>
    </location>
</feature>
<feature type="binding site" evidence="3">
    <location>
        <begin position="1" status="less than"/>
        <end position="7"/>
    </location>
    <ligand>
        <name>ATP</name>
        <dbReference type="ChEBI" id="CHEBI:30616"/>
    </ligand>
</feature>
<feature type="binding site" evidence="3">
    <location>
        <position position="22"/>
    </location>
    <ligand>
        <name>ATP</name>
        <dbReference type="ChEBI" id="CHEBI:30616"/>
    </ligand>
</feature>
<feature type="binding site" evidence="1">
    <location>
        <begin position="68"/>
        <end position="70"/>
    </location>
    <ligand>
        <name>staurosporine</name>
        <dbReference type="ChEBI" id="CHEBI:57491"/>
    </ligand>
</feature>
<feature type="modified residue" description="Phosphothreonine; by MAPK14" evidence="2">
    <location>
        <position position="151"/>
    </location>
</feature>
<feature type="modified residue" description="Phosphoserine; by MAPK14" evidence="2">
    <location>
        <position position="201"/>
    </location>
</feature>
<feature type="modified residue" description="Phosphoserine; by autocatalysis" evidence="1">
    <location>
        <position position="257"/>
    </location>
</feature>
<feature type="modified residue" description="Phosphothreonine; by MAPK14" evidence="2">
    <location>
        <position position="263"/>
    </location>
</feature>
<feature type="cross-link" description="Glycyl lysine isopeptide (Lys-Gly) (interchain with G-Cter in SUMO)" evidence="1">
    <location>
        <position position="282"/>
    </location>
</feature>
<feature type="non-terminal residue">
    <location>
        <position position="1"/>
    </location>
</feature>